<organism>
    <name type="scientific">Pyrococcus abyssi (strain GE5 / Orsay)</name>
    <dbReference type="NCBI Taxonomy" id="272844"/>
    <lineage>
        <taxon>Archaea</taxon>
        <taxon>Methanobacteriati</taxon>
        <taxon>Methanobacteriota</taxon>
        <taxon>Thermococci</taxon>
        <taxon>Thermococcales</taxon>
        <taxon>Thermococcaceae</taxon>
        <taxon>Pyrococcus</taxon>
    </lineage>
</organism>
<feature type="chain" id="PRO_0000103203" description="Uncharacterized DapA-like lyase PYRAB12600">
    <location>
        <begin position="1"/>
        <end position="294"/>
    </location>
</feature>
<feature type="active site" description="Charge relay system" evidence="1">
    <location>
        <position position="43"/>
    </location>
</feature>
<feature type="active site" description="Charge relay system" evidence="1">
    <location>
        <position position="104"/>
    </location>
</feature>
<feature type="active site" description="Proton donor" evidence="1">
    <location>
        <position position="130"/>
    </location>
</feature>
<feature type="active site" description="Schiff-base intermediate with substrate" evidence="1">
    <location>
        <position position="158"/>
    </location>
</feature>
<evidence type="ECO:0000250" key="1"/>
<evidence type="ECO:0000305" key="2"/>
<sequence>MEGVIVPLVTPFREDYSIDFEALEWHIRFLEEKGVHGIFVNSTTGEFTSLNTDERKMLAEKGREITSGMYLVGTGSTSTLEVIELSRHAEDIGADGIVIVAPYYCKLKDEEILKHFSMVAERVDIPIIVYAIPSCANPVPVDIIRKVSLEYSNIIGVKASVDSLTYLQELIEVKEERKDFRVFTGLDQYFLSTLLLGGDGGIMACANFAPEIHLQIWNSFKRRNFEEAIKLSRVLGEISRIYNVASSFASAVKLAMIAKGFPIKPVLRPPHVIDGEEVFNEIKGILRSLENVKP</sequence>
<protein>
    <recommendedName>
        <fullName>Uncharacterized DapA-like lyase PYRAB12600</fullName>
        <ecNumber>4.-.-.-</ecNumber>
    </recommendedName>
</protein>
<reference key="1">
    <citation type="journal article" date="2003" name="Mol. Microbiol.">
        <title>An integrated analysis of the genome of the hyperthermophilic archaeon Pyrococcus abyssi.</title>
        <authorList>
            <person name="Cohen G.N."/>
            <person name="Barbe V."/>
            <person name="Flament D."/>
            <person name="Galperin M."/>
            <person name="Heilig R."/>
            <person name="Lecompte O."/>
            <person name="Poch O."/>
            <person name="Prieur D."/>
            <person name="Querellou J."/>
            <person name="Ripp R."/>
            <person name="Thierry J.-C."/>
            <person name="Van der Oost J."/>
            <person name="Weissenbach J."/>
            <person name="Zivanovic Y."/>
            <person name="Forterre P."/>
        </authorList>
    </citation>
    <scope>NUCLEOTIDE SEQUENCE [LARGE SCALE GENOMIC DNA]</scope>
    <source>
        <strain>GE5 / Orsay</strain>
    </source>
</reference>
<reference key="2">
    <citation type="journal article" date="2012" name="Curr. Microbiol.">
        <title>Re-annotation of two hyperthermophilic archaea Pyrococcus abyssi GE5 and Pyrococcus furiosus DSM 3638.</title>
        <authorList>
            <person name="Gao J."/>
            <person name="Wang J."/>
        </authorList>
    </citation>
    <scope>GENOME REANNOTATION</scope>
    <source>
        <strain>GE5 / Orsay</strain>
    </source>
</reference>
<proteinExistence type="inferred from homology"/>
<comment type="subunit">
    <text evidence="1">Homotetramer.</text>
</comment>
<comment type="subcellular location">
    <subcellularLocation>
        <location evidence="2">Cytoplasm</location>
    </subcellularLocation>
</comment>
<comment type="similarity">
    <text evidence="2">Belongs to the DapA family.</text>
</comment>
<gene>
    <name type="primary">dapAL</name>
    <name type="synonym">dapA</name>
    <name type="ordered locus">PYRAB12600</name>
    <name type="ORF">PAB0832</name>
</gene>
<accession>Q9UZ94</accession>
<accession>G8ZKQ4</accession>
<keyword id="KW-0963">Cytoplasm</keyword>
<keyword id="KW-0456">Lyase</keyword>
<keyword id="KW-0704">Schiff base</keyword>
<name>DAPAL_PYRAB</name>
<dbReference type="EC" id="4.-.-.-"/>
<dbReference type="EMBL" id="AJ248287">
    <property type="protein sequence ID" value="CAB50165.1"/>
    <property type="molecule type" value="Genomic_DNA"/>
</dbReference>
<dbReference type="EMBL" id="HE613800">
    <property type="protein sequence ID" value="CCE70697.1"/>
    <property type="molecule type" value="Genomic_DNA"/>
</dbReference>
<dbReference type="PIR" id="H75033">
    <property type="entry name" value="H75033"/>
</dbReference>
<dbReference type="RefSeq" id="WP_010868373.1">
    <property type="nucleotide sequence ID" value="NC_000868.1"/>
</dbReference>
<dbReference type="SMR" id="Q9UZ94"/>
<dbReference type="STRING" id="272844.PAB0832"/>
<dbReference type="KEGG" id="pab:PAB0832"/>
<dbReference type="PATRIC" id="fig|272844.11.peg.1340"/>
<dbReference type="eggNOG" id="arCOG04172">
    <property type="taxonomic scope" value="Archaea"/>
</dbReference>
<dbReference type="HOGENOM" id="CLU_049343_5_1_2"/>
<dbReference type="OrthoDB" id="33636at2157"/>
<dbReference type="PhylomeDB" id="Q9UZ94"/>
<dbReference type="Proteomes" id="UP000000810">
    <property type="component" value="Chromosome"/>
</dbReference>
<dbReference type="Proteomes" id="UP000009139">
    <property type="component" value="Chromosome"/>
</dbReference>
<dbReference type="GO" id="GO:0005737">
    <property type="term" value="C:cytoplasm"/>
    <property type="evidence" value="ECO:0007669"/>
    <property type="project" value="UniProtKB-SubCell"/>
</dbReference>
<dbReference type="GO" id="GO:0008675">
    <property type="term" value="F:2-dehydro-3-deoxy-phosphogluconate aldolase activity"/>
    <property type="evidence" value="ECO:0007669"/>
    <property type="project" value="UniProtKB-ARBA"/>
</dbReference>
<dbReference type="GO" id="GO:0008840">
    <property type="term" value="F:4-hydroxy-tetrahydrodipicolinate synthase activity"/>
    <property type="evidence" value="ECO:0007669"/>
    <property type="project" value="TreeGrafter"/>
</dbReference>
<dbReference type="GO" id="GO:0044281">
    <property type="term" value="P:small molecule metabolic process"/>
    <property type="evidence" value="ECO:0007669"/>
    <property type="project" value="UniProtKB-ARBA"/>
</dbReference>
<dbReference type="CDD" id="cd00408">
    <property type="entry name" value="DHDPS-like"/>
    <property type="match status" value="1"/>
</dbReference>
<dbReference type="Gene3D" id="3.20.20.70">
    <property type="entry name" value="Aldolase class I"/>
    <property type="match status" value="1"/>
</dbReference>
<dbReference type="InterPro" id="IPR013785">
    <property type="entry name" value="Aldolase_TIM"/>
</dbReference>
<dbReference type="InterPro" id="IPR002220">
    <property type="entry name" value="DapA-like"/>
</dbReference>
<dbReference type="InterPro" id="IPR020625">
    <property type="entry name" value="Schiff_base-form_aldolases_AS"/>
</dbReference>
<dbReference type="PANTHER" id="PTHR12128:SF66">
    <property type="entry name" value="4-HYDROXY-2-OXOGLUTARATE ALDOLASE, MITOCHONDRIAL"/>
    <property type="match status" value="1"/>
</dbReference>
<dbReference type="PANTHER" id="PTHR12128">
    <property type="entry name" value="DIHYDRODIPICOLINATE SYNTHASE"/>
    <property type="match status" value="1"/>
</dbReference>
<dbReference type="Pfam" id="PF00701">
    <property type="entry name" value="DHDPS"/>
    <property type="match status" value="1"/>
</dbReference>
<dbReference type="PIRSF" id="PIRSF001365">
    <property type="entry name" value="DHDPS"/>
    <property type="match status" value="1"/>
</dbReference>
<dbReference type="PRINTS" id="PR00146">
    <property type="entry name" value="DHPICSNTHASE"/>
</dbReference>
<dbReference type="SMART" id="SM01130">
    <property type="entry name" value="DHDPS"/>
    <property type="match status" value="1"/>
</dbReference>
<dbReference type="SUPFAM" id="SSF51569">
    <property type="entry name" value="Aldolase"/>
    <property type="match status" value="1"/>
</dbReference>
<dbReference type="PROSITE" id="PS00666">
    <property type="entry name" value="DHDPS_2"/>
    <property type="match status" value="1"/>
</dbReference>